<accession>Q8BUK6</accession>
<accession>Q540A0</accession>
<accession>Q8BV48</accession>
<accession>Q8BW57</accession>
<accession>Q8BY41</accession>
<proteinExistence type="evidence at protein level"/>
<feature type="chain" id="PRO_0000219198" description="Protein Hook homolog 3">
    <location>
        <begin position="1"/>
        <end position="718"/>
    </location>
</feature>
<feature type="domain" description="Calponin-homology (CH)" evidence="4">
    <location>
        <begin position="10"/>
        <end position="126"/>
    </location>
</feature>
<feature type="region of interest" description="Sufficient for interaction with microtubules" evidence="1">
    <location>
        <begin position="1"/>
        <end position="164"/>
    </location>
</feature>
<feature type="region of interest" description="Sufficient for interaction with IIGP1" evidence="8">
    <location>
        <begin position="450"/>
        <end position="671"/>
    </location>
</feature>
<feature type="region of interest" description="Required for association with Golgi" evidence="1">
    <location>
        <begin position="553"/>
        <end position="718"/>
    </location>
</feature>
<feature type="region of interest" description="Disordered" evidence="5">
    <location>
        <begin position="682"/>
        <end position="718"/>
    </location>
</feature>
<feature type="coiled-coil region" evidence="3">
    <location>
        <begin position="168"/>
        <end position="433"/>
    </location>
</feature>
<feature type="coiled-coil region" evidence="3">
    <location>
        <begin position="462"/>
        <end position="663"/>
    </location>
</feature>
<feature type="compositionally biased region" description="Polar residues" evidence="5">
    <location>
        <begin position="687"/>
        <end position="706"/>
    </location>
</feature>
<feature type="modified residue" description="N-acetylmethionine" evidence="2">
    <location>
        <position position="1"/>
    </location>
</feature>
<feature type="modified residue" description="Phosphoserine" evidence="2">
    <location>
        <position position="6"/>
    </location>
</feature>
<feature type="modified residue" description="Phosphoserine" evidence="14">
    <location>
        <position position="238"/>
    </location>
</feature>
<feature type="modified residue" description="Phosphoserine" evidence="2">
    <location>
        <position position="693"/>
    </location>
</feature>
<feature type="modified residue" description="Phosphoserine" evidence="2">
    <location>
        <position position="707"/>
    </location>
</feature>
<feature type="sequence conflict" description="In Ref. 2; BAC37897." evidence="13" ref="2">
    <original>Q</original>
    <variation>H</variation>
    <location>
        <position position="94"/>
    </location>
</feature>
<organism>
    <name type="scientific">Mus musculus</name>
    <name type="common">Mouse</name>
    <dbReference type="NCBI Taxonomy" id="10090"/>
    <lineage>
        <taxon>Eukaryota</taxon>
        <taxon>Metazoa</taxon>
        <taxon>Chordata</taxon>
        <taxon>Craniata</taxon>
        <taxon>Vertebrata</taxon>
        <taxon>Euteleostomi</taxon>
        <taxon>Mammalia</taxon>
        <taxon>Eutheria</taxon>
        <taxon>Euarchontoglires</taxon>
        <taxon>Glires</taxon>
        <taxon>Rodentia</taxon>
        <taxon>Myomorpha</taxon>
        <taxon>Muroidea</taxon>
        <taxon>Muridae</taxon>
        <taxon>Murinae</taxon>
        <taxon>Mus</taxon>
        <taxon>Mus</taxon>
    </lineage>
</organism>
<evidence type="ECO:0000250" key="1"/>
<evidence type="ECO:0000250" key="2">
    <source>
        <dbReference type="UniProtKB" id="Q86VS8"/>
    </source>
</evidence>
<evidence type="ECO:0000255" key="3"/>
<evidence type="ECO:0000255" key="4">
    <source>
        <dbReference type="PROSITE-ProRule" id="PRU00044"/>
    </source>
</evidence>
<evidence type="ECO:0000256" key="5">
    <source>
        <dbReference type="SAM" id="MobiDB-lite"/>
    </source>
</evidence>
<evidence type="ECO:0000269" key="6">
    <source>
    </source>
</evidence>
<evidence type="ECO:0000269" key="7">
    <source>
    </source>
</evidence>
<evidence type="ECO:0000269" key="8">
    <source>
    </source>
</evidence>
<evidence type="ECO:0000269" key="9">
    <source>
    </source>
</evidence>
<evidence type="ECO:0000269" key="10">
    <source>
    </source>
</evidence>
<evidence type="ECO:0000269" key="11">
    <source>
    </source>
</evidence>
<evidence type="ECO:0000269" key="12">
    <source>
    </source>
</evidence>
<evidence type="ECO:0000305" key="13"/>
<evidence type="ECO:0007744" key="14">
    <source>
    </source>
</evidence>
<gene>
    <name type="primary">Hook3</name>
</gene>
<dbReference type="EMBL" id="AY223806">
    <property type="protein sequence ID" value="AAO43109.1"/>
    <property type="molecule type" value="mRNA"/>
</dbReference>
<dbReference type="EMBL" id="AK042180">
    <property type="protein sequence ID" value="BAC31191.1"/>
    <property type="molecule type" value="mRNA"/>
</dbReference>
<dbReference type="EMBL" id="AK054263">
    <property type="protein sequence ID" value="BAC35709.1"/>
    <property type="molecule type" value="mRNA"/>
</dbReference>
<dbReference type="EMBL" id="AK080377">
    <property type="protein sequence ID" value="BAC37897.1"/>
    <property type="molecule type" value="mRNA"/>
</dbReference>
<dbReference type="EMBL" id="AK084594">
    <property type="protein sequence ID" value="BAC39222.1"/>
    <property type="molecule type" value="mRNA"/>
</dbReference>
<dbReference type="EMBL" id="AK145149">
    <property type="protein sequence ID" value="BAE26261.1"/>
    <property type="molecule type" value="mRNA"/>
</dbReference>
<dbReference type="EMBL" id="CH466580">
    <property type="protein sequence ID" value="EDL32811.1"/>
    <property type="molecule type" value="Genomic_DNA"/>
</dbReference>
<dbReference type="CCDS" id="CCDS22206.1"/>
<dbReference type="RefSeq" id="NP_997542.1">
    <property type="nucleotide sequence ID" value="NM_207659.3"/>
</dbReference>
<dbReference type="SMR" id="Q8BUK6"/>
<dbReference type="BioGRID" id="235828">
    <property type="interactions" value="6"/>
</dbReference>
<dbReference type="CORUM" id="Q8BUK6"/>
<dbReference type="FunCoup" id="Q8BUK6">
    <property type="interactions" value="2057"/>
</dbReference>
<dbReference type="IntAct" id="Q8BUK6">
    <property type="interactions" value="4"/>
</dbReference>
<dbReference type="STRING" id="10090.ENSMUSP00000046788"/>
<dbReference type="GlyGen" id="Q8BUK6">
    <property type="glycosylation" value="1 site, 1 N-linked glycan (1 site)"/>
</dbReference>
<dbReference type="iPTMnet" id="Q8BUK6"/>
<dbReference type="PhosphoSitePlus" id="Q8BUK6"/>
<dbReference type="PaxDb" id="10090-ENSMUSP00000046788"/>
<dbReference type="PeptideAtlas" id="Q8BUK6"/>
<dbReference type="ProteomicsDB" id="273378"/>
<dbReference type="Pumba" id="Q8BUK6"/>
<dbReference type="Antibodypedia" id="11516">
    <property type="antibodies" value="101 antibodies from 27 providers"/>
</dbReference>
<dbReference type="DNASU" id="320191"/>
<dbReference type="Ensembl" id="ENSMUST00000037182.14">
    <property type="protein sequence ID" value="ENSMUSP00000046788.8"/>
    <property type="gene ID" value="ENSMUSG00000037234.18"/>
</dbReference>
<dbReference type="GeneID" id="320191"/>
<dbReference type="KEGG" id="mmu:320191"/>
<dbReference type="UCSC" id="uc009lhj.2">
    <property type="organism name" value="mouse"/>
</dbReference>
<dbReference type="AGR" id="MGI:2443554"/>
<dbReference type="CTD" id="84376"/>
<dbReference type="MGI" id="MGI:2443554">
    <property type="gene designation" value="Hook3"/>
</dbReference>
<dbReference type="VEuPathDB" id="HostDB:ENSMUSG00000037234"/>
<dbReference type="eggNOG" id="ENOG502QQM8">
    <property type="taxonomic scope" value="Eukaryota"/>
</dbReference>
<dbReference type="GeneTree" id="ENSGT00940000158075"/>
<dbReference type="HOGENOM" id="CLU_011214_1_0_1"/>
<dbReference type="InParanoid" id="Q8BUK6"/>
<dbReference type="OMA" id="DAKYRKC"/>
<dbReference type="OrthoDB" id="49395at2759"/>
<dbReference type="PhylomeDB" id="Q8BUK6"/>
<dbReference type="TreeFam" id="TF320231"/>
<dbReference type="BioGRID-ORCS" id="320191">
    <property type="hits" value="5 hits in 80 CRISPR screens"/>
</dbReference>
<dbReference type="CD-CODE" id="01CA17F3">
    <property type="entry name" value="Centrosome"/>
</dbReference>
<dbReference type="CD-CODE" id="CE726F99">
    <property type="entry name" value="Postsynaptic density"/>
</dbReference>
<dbReference type="ChiTaRS" id="Hook3">
    <property type="organism name" value="mouse"/>
</dbReference>
<dbReference type="PRO" id="PR:Q8BUK6"/>
<dbReference type="Proteomes" id="UP000000589">
    <property type="component" value="Chromosome 8"/>
</dbReference>
<dbReference type="RNAct" id="Q8BUK6">
    <property type="molecule type" value="protein"/>
</dbReference>
<dbReference type="Bgee" id="ENSMUSG00000037234">
    <property type="expression patterns" value="Expressed in otolith organ and 223 other cell types or tissues"/>
</dbReference>
<dbReference type="ExpressionAtlas" id="Q8BUK6">
    <property type="expression patterns" value="baseline and differential"/>
</dbReference>
<dbReference type="GO" id="GO:0034451">
    <property type="term" value="C:centriolar satellite"/>
    <property type="evidence" value="ECO:0000314"/>
    <property type="project" value="MGI"/>
</dbReference>
<dbReference type="GO" id="GO:0005813">
    <property type="term" value="C:centrosome"/>
    <property type="evidence" value="ECO:0000314"/>
    <property type="project" value="BHF-UCL"/>
</dbReference>
<dbReference type="GO" id="GO:0005801">
    <property type="term" value="C:cis-Golgi network"/>
    <property type="evidence" value="ECO:0007669"/>
    <property type="project" value="Ensembl"/>
</dbReference>
<dbReference type="GO" id="GO:0005737">
    <property type="term" value="C:cytoplasm"/>
    <property type="evidence" value="ECO:0000314"/>
    <property type="project" value="MGI"/>
</dbReference>
<dbReference type="GO" id="GO:0070695">
    <property type="term" value="C:FHF complex"/>
    <property type="evidence" value="ECO:0000250"/>
    <property type="project" value="UniProtKB"/>
</dbReference>
<dbReference type="GO" id="GO:0030897">
    <property type="term" value="C:HOPS complex"/>
    <property type="evidence" value="ECO:0007669"/>
    <property type="project" value="Ensembl"/>
</dbReference>
<dbReference type="GO" id="GO:0005874">
    <property type="term" value="C:microtubule"/>
    <property type="evidence" value="ECO:0007669"/>
    <property type="project" value="UniProtKB-KW"/>
</dbReference>
<dbReference type="GO" id="GO:0000242">
    <property type="term" value="C:pericentriolar material"/>
    <property type="evidence" value="ECO:0000314"/>
    <property type="project" value="BHF-UCL"/>
</dbReference>
<dbReference type="GO" id="GO:0034452">
    <property type="term" value="F:dynactin binding"/>
    <property type="evidence" value="ECO:0000250"/>
    <property type="project" value="UniProtKB"/>
</dbReference>
<dbReference type="GO" id="GO:0045505">
    <property type="term" value="F:dynein intermediate chain binding"/>
    <property type="evidence" value="ECO:0000250"/>
    <property type="project" value="UniProtKB"/>
</dbReference>
<dbReference type="GO" id="GO:0045503">
    <property type="term" value="F:dynein light chain binding"/>
    <property type="evidence" value="ECO:0007669"/>
    <property type="project" value="Ensembl"/>
</dbReference>
<dbReference type="GO" id="GO:0042802">
    <property type="term" value="F:identical protein binding"/>
    <property type="evidence" value="ECO:0007669"/>
    <property type="project" value="Ensembl"/>
</dbReference>
<dbReference type="GO" id="GO:0008017">
    <property type="term" value="F:microtubule binding"/>
    <property type="evidence" value="ECO:0007669"/>
    <property type="project" value="Ensembl"/>
</dbReference>
<dbReference type="GO" id="GO:0031122">
    <property type="term" value="P:cytoplasmic microtubule organization"/>
    <property type="evidence" value="ECO:0007669"/>
    <property type="project" value="Ensembl"/>
</dbReference>
<dbReference type="GO" id="GO:0030705">
    <property type="term" value="P:cytoskeleton-dependent intracellular transport"/>
    <property type="evidence" value="ECO:0007669"/>
    <property type="project" value="InterPro"/>
</dbReference>
<dbReference type="GO" id="GO:0045022">
    <property type="term" value="P:early endosome to late endosome transport"/>
    <property type="evidence" value="ECO:0000250"/>
    <property type="project" value="UniProtKB"/>
</dbReference>
<dbReference type="GO" id="GO:0007032">
    <property type="term" value="P:endosome organization"/>
    <property type="evidence" value="ECO:0000250"/>
    <property type="project" value="UniProtKB"/>
</dbReference>
<dbReference type="GO" id="GO:0008333">
    <property type="term" value="P:endosome to lysosome transport"/>
    <property type="evidence" value="ECO:0000250"/>
    <property type="project" value="UniProtKB"/>
</dbReference>
<dbReference type="GO" id="GO:0051645">
    <property type="term" value="P:Golgi localization"/>
    <property type="evidence" value="ECO:0007669"/>
    <property type="project" value="Ensembl"/>
</dbReference>
<dbReference type="GO" id="GO:0022027">
    <property type="term" value="P:interkinetic nuclear migration"/>
    <property type="evidence" value="ECO:0000315"/>
    <property type="project" value="BHF-UCL"/>
</dbReference>
<dbReference type="GO" id="GO:0007040">
    <property type="term" value="P:lysosome organization"/>
    <property type="evidence" value="ECO:0000250"/>
    <property type="project" value="UniProtKB"/>
</dbReference>
<dbReference type="GO" id="GO:0034454">
    <property type="term" value="P:microtubule anchoring at centrosome"/>
    <property type="evidence" value="ECO:0000315"/>
    <property type="project" value="MGI"/>
</dbReference>
<dbReference type="GO" id="GO:0050768">
    <property type="term" value="P:negative regulation of neurogenesis"/>
    <property type="evidence" value="ECO:0000315"/>
    <property type="project" value="BHF-UCL"/>
</dbReference>
<dbReference type="GO" id="GO:0097150">
    <property type="term" value="P:neuronal stem cell population maintenance"/>
    <property type="evidence" value="ECO:0000315"/>
    <property type="project" value="MGI"/>
</dbReference>
<dbReference type="GO" id="GO:0071539">
    <property type="term" value="P:protein localization to centrosome"/>
    <property type="evidence" value="ECO:0000315"/>
    <property type="project" value="BHF-UCL"/>
</dbReference>
<dbReference type="GO" id="GO:1905719">
    <property type="term" value="P:protein localization to perinuclear region of cytoplasm"/>
    <property type="evidence" value="ECO:0000250"/>
    <property type="project" value="UniProtKB"/>
</dbReference>
<dbReference type="GO" id="GO:0015031">
    <property type="term" value="P:protein transport"/>
    <property type="evidence" value="ECO:0007669"/>
    <property type="project" value="UniProtKB-KW"/>
</dbReference>
<dbReference type="CDD" id="cd22226">
    <property type="entry name" value="HkD_Hook3"/>
    <property type="match status" value="1"/>
</dbReference>
<dbReference type="FunFam" id="1.10.418.10:FF:000197">
    <property type="entry name" value="Protein Hook homolog 3"/>
    <property type="match status" value="1"/>
</dbReference>
<dbReference type="Gene3D" id="1.10.418.10">
    <property type="entry name" value="Calponin-like domain"/>
    <property type="match status" value="1"/>
</dbReference>
<dbReference type="InterPro" id="IPR001715">
    <property type="entry name" value="CH_dom"/>
</dbReference>
<dbReference type="InterPro" id="IPR036872">
    <property type="entry name" value="CH_dom_sf"/>
</dbReference>
<dbReference type="InterPro" id="IPR008636">
    <property type="entry name" value="Hook_C"/>
</dbReference>
<dbReference type="InterPro" id="IPR043936">
    <property type="entry name" value="HOOK_N"/>
</dbReference>
<dbReference type="PANTHER" id="PTHR18947">
    <property type="entry name" value="HOOK PROTEINS"/>
    <property type="match status" value="1"/>
</dbReference>
<dbReference type="PANTHER" id="PTHR18947:SF38">
    <property type="entry name" value="PROTEIN HOOK HOMOLOG 3"/>
    <property type="match status" value="1"/>
</dbReference>
<dbReference type="Pfam" id="PF05622">
    <property type="entry name" value="HOOK"/>
    <property type="match status" value="1"/>
</dbReference>
<dbReference type="Pfam" id="PF19047">
    <property type="entry name" value="HOOK_N"/>
    <property type="match status" value="1"/>
</dbReference>
<dbReference type="SUPFAM" id="SSF116907">
    <property type="entry name" value="Hook domain"/>
    <property type="match status" value="1"/>
</dbReference>
<dbReference type="PROSITE" id="PS50021">
    <property type="entry name" value="CH"/>
    <property type="match status" value="1"/>
</dbReference>
<reference key="1">
    <citation type="journal article" date="2004" name="J. Cell Sci.">
        <title>IIGP, a member of the IFN inducible and microbial defense mediating 47 kDa GTPase family, interacts with the microtubule binding protein hook3.</title>
        <authorList>
            <person name="Kaiser F."/>
            <person name="Kaufmann S.H.E."/>
            <person name="Zerrahn J."/>
        </authorList>
    </citation>
    <scope>NUCLEOTIDE SEQUENCE [LARGE SCALE MRNA]</scope>
    <scope>INTERACTION WITH IIGP1</scope>
    <scope>SUBCELLULAR LOCATION</scope>
</reference>
<reference key="2">
    <citation type="journal article" date="2005" name="Science">
        <title>The transcriptional landscape of the mammalian genome.</title>
        <authorList>
            <person name="Carninci P."/>
            <person name="Kasukawa T."/>
            <person name="Katayama S."/>
            <person name="Gough J."/>
            <person name="Frith M.C."/>
            <person name="Maeda N."/>
            <person name="Oyama R."/>
            <person name="Ravasi T."/>
            <person name="Lenhard B."/>
            <person name="Wells C."/>
            <person name="Kodzius R."/>
            <person name="Shimokawa K."/>
            <person name="Bajic V.B."/>
            <person name="Brenner S.E."/>
            <person name="Batalov S."/>
            <person name="Forrest A.R."/>
            <person name="Zavolan M."/>
            <person name="Davis M.J."/>
            <person name="Wilming L.G."/>
            <person name="Aidinis V."/>
            <person name="Allen J.E."/>
            <person name="Ambesi-Impiombato A."/>
            <person name="Apweiler R."/>
            <person name="Aturaliya R.N."/>
            <person name="Bailey T.L."/>
            <person name="Bansal M."/>
            <person name="Baxter L."/>
            <person name="Beisel K.W."/>
            <person name="Bersano T."/>
            <person name="Bono H."/>
            <person name="Chalk A.M."/>
            <person name="Chiu K.P."/>
            <person name="Choudhary V."/>
            <person name="Christoffels A."/>
            <person name="Clutterbuck D.R."/>
            <person name="Crowe M.L."/>
            <person name="Dalla E."/>
            <person name="Dalrymple B.P."/>
            <person name="de Bono B."/>
            <person name="Della Gatta G."/>
            <person name="di Bernardo D."/>
            <person name="Down T."/>
            <person name="Engstrom P."/>
            <person name="Fagiolini M."/>
            <person name="Faulkner G."/>
            <person name="Fletcher C.F."/>
            <person name="Fukushima T."/>
            <person name="Furuno M."/>
            <person name="Futaki S."/>
            <person name="Gariboldi M."/>
            <person name="Georgii-Hemming P."/>
            <person name="Gingeras T.R."/>
            <person name="Gojobori T."/>
            <person name="Green R.E."/>
            <person name="Gustincich S."/>
            <person name="Harbers M."/>
            <person name="Hayashi Y."/>
            <person name="Hensch T.K."/>
            <person name="Hirokawa N."/>
            <person name="Hill D."/>
            <person name="Huminiecki L."/>
            <person name="Iacono M."/>
            <person name="Ikeo K."/>
            <person name="Iwama A."/>
            <person name="Ishikawa T."/>
            <person name="Jakt M."/>
            <person name="Kanapin A."/>
            <person name="Katoh M."/>
            <person name="Kawasawa Y."/>
            <person name="Kelso J."/>
            <person name="Kitamura H."/>
            <person name="Kitano H."/>
            <person name="Kollias G."/>
            <person name="Krishnan S.P."/>
            <person name="Kruger A."/>
            <person name="Kummerfeld S.K."/>
            <person name="Kurochkin I.V."/>
            <person name="Lareau L.F."/>
            <person name="Lazarevic D."/>
            <person name="Lipovich L."/>
            <person name="Liu J."/>
            <person name="Liuni S."/>
            <person name="McWilliam S."/>
            <person name="Madan Babu M."/>
            <person name="Madera M."/>
            <person name="Marchionni L."/>
            <person name="Matsuda H."/>
            <person name="Matsuzawa S."/>
            <person name="Miki H."/>
            <person name="Mignone F."/>
            <person name="Miyake S."/>
            <person name="Morris K."/>
            <person name="Mottagui-Tabar S."/>
            <person name="Mulder N."/>
            <person name="Nakano N."/>
            <person name="Nakauchi H."/>
            <person name="Ng P."/>
            <person name="Nilsson R."/>
            <person name="Nishiguchi S."/>
            <person name="Nishikawa S."/>
            <person name="Nori F."/>
            <person name="Ohara O."/>
            <person name="Okazaki Y."/>
            <person name="Orlando V."/>
            <person name="Pang K.C."/>
            <person name="Pavan W.J."/>
            <person name="Pavesi G."/>
            <person name="Pesole G."/>
            <person name="Petrovsky N."/>
            <person name="Piazza S."/>
            <person name="Reed J."/>
            <person name="Reid J.F."/>
            <person name="Ring B.Z."/>
            <person name="Ringwald M."/>
            <person name="Rost B."/>
            <person name="Ruan Y."/>
            <person name="Salzberg S.L."/>
            <person name="Sandelin A."/>
            <person name="Schneider C."/>
            <person name="Schoenbach C."/>
            <person name="Sekiguchi K."/>
            <person name="Semple C.A."/>
            <person name="Seno S."/>
            <person name="Sessa L."/>
            <person name="Sheng Y."/>
            <person name="Shibata Y."/>
            <person name="Shimada H."/>
            <person name="Shimada K."/>
            <person name="Silva D."/>
            <person name="Sinclair B."/>
            <person name="Sperling S."/>
            <person name="Stupka E."/>
            <person name="Sugiura K."/>
            <person name="Sultana R."/>
            <person name="Takenaka Y."/>
            <person name="Taki K."/>
            <person name="Tammoja K."/>
            <person name="Tan S.L."/>
            <person name="Tang S."/>
            <person name="Taylor M.S."/>
            <person name="Tegner J."/>
            <person name="Teichmann S.A."/>
            <person name="Ueda H.R."/>
            <person name="van Nimwegen E."/>
            <person name="Verardo R."/>
            <person name="Wei C.L."/>
            <person name="Yagi K."/>
            <person name="Yamanishi H."/>
            <person name="Zabarovsky E."/>
            <person name="Zhu S."/>
            <person name="Zimmer A."/>
            <person name="Hide W."/>
            <person name="Bult C."/>
            <person name="Grimmond S.M."/>
            <person name="Teasdale R.D."/>
            <person name="Liu E.T."/>
            <person name="Brusic V."/>
            <person name="Quackenbush J."/>
            <person name="Wahlestedt C."/>
            <person name="Mattick J.S."/>
            <person name="Hume D.A."/>
            <person name="Kai C."/>
            <person name="Sasaki D."/>
            <person name="Tomaru Y."/>
            <person name="Fukuda S."/>
            <person name="Kanamori-Katayama M."/>
            <person name="Suzuki M."/>
            <person name="Aoki J."/>
            <person name="Arakawa T."/>
            <person name="Iida J."/>
            <person name="Imamura K."/>
            <person name="Itoh M."/>
            <person name="Kato T."/>
            <person name="Kawaji H."/>
            <person name="Kawagashira N."/>
            <person name="Kawashima T."/>
            <person name="Kojima M."/>
            <person name="Kondo S."/>
            <person name="Konno H."/>
            <person name="Nakano K."/>
            <person name="Ninomiya N."/>
            <person name="Nishio T."/>
            <person name="Okada M."/>
            <person name="Plessy C."/>
            <person name="Shibata K."/>
            <person name="Shiraki T."/>
            <person name="Suzuki S."/>
            <person name="Tagami M."/>
            <person name="Waki K."/>
            <person name="Watahiki A."/>
            <person name="Okamura-Oho Y."/>
            <person name="Suzuki H."/>
            <person name="Kawai J."/>
            <person name="Hayashizaki Y."/>
        </authorList>
    </citation>
    <scope>NUCLEOTIDE SEQUENCE [LARGE SCALE MRNA]</scope>
    <source>
        <strain>C57BL/6J</strain>
        <tissue>Heart</tissue>
        <tissue>Mammary gland</tissue>
        <tissue>Ovary</tissue>
        <tissue>Thymus</tissue>
    </source>
</reference>
<reference key="3">
    <citation type="submission" date="2005-09" db="EMBL/GenBank/DDBJ databases">
        <authorList>
            <person name="Mural R.J."/>
            <person name="Adams M.D."/>
            <person name="Myers E.W."/>
            <person name="Smith H.O."/>
            <person name="Venter J.C."/>
        </authorList>
    </citation>
    <scope>NUCLEOTIDE SEQUENCE [LARGE SCALE GENOMIC DNA]</scope>
</reference>
<reference key="4">
    <citation type="journal article" date="2001" name="J. Cell Biol.">
        <title>The Golgi-associated hook3 protein is a member of a novel family of microtubule-binding proteins.</title>
        <authorList>
            <person name="Walenta J.H."/>
            <person name="Didier A.J."/>
            <person name="Liu X."/>
            <person name="Kraemer H."/>
        </authorList>
    </citation>
    <scope>TISSUE SPECIFICITY</scope>
</reference>
<reference key="5">
    <citation type="journal article" date="2003" name="Mol. Microbiol.">
        <title>The Salmonella SpiC protein targets the mammalian Hook3 protein function to alter cellular trafficking.</title>
        <authorList>
            <person name="Shotland Y."/>
            <person name="Kraemer H."/>
            <person name="Groisman E.A."/>
        </authorList>
    </citation>
    <scope>INTERACTION WITH SPIC (MICROBIAL INFECTION)</scope>
    <scope>FUNCTION (MICROBIAL INFECTION)</scope>
</reference>
<reference key="6">
    <citation type="journal article" date="2007" name="J. Biol. Chem.">
        <title>The microtubule-binding protein Hook3 interacts with a cytoplasmic domain of scavenger receptor A.</title>
        <authorList>
            <person name="Sano H."/>
            <person name="Ishino M."/>
            <person name="Kraemer H."/>
            <person name="Shimizu T."/>
            <person name="Mitsuzawa H."/>
            <person name="Nishitani C."/>
            <person name="Kuroki Y."/>
        </authorList>
    </citation>
    <scope>INTERACTION WITH MSR1</scope>
</reference>
<reference key="7">
    <citation type="journal article" date="2007" name="Traffic">
        <title>Hook2 localizes to the centrosome, binds directly to centriolin/CEP110 and contributes to centrosomal function.</title>
        <authorList>
            <person name="Szebenyi G."/>
            <person name="Hall B."/>
            <person name="Yu R."/>
            <person name="Hashim A.I."/>
            <person name="Kraemer H."/>
        </authorList>
    </citation>
    <scope>TISSUE SPECIFICITY</scope>
</reference>
<reference key="8">
    <citation type="journal article" date="2010" name="Cell">
        <title>A tissue-specific atlas of mouse protein phosphorylation and expression.</title>
        <authorList>
            <person name="Huttlin E.L."/>
            <person name="Jedrychowski M.P."/>
            <person name="Elias J.E."/>
            <person name="Goswami T."/>
            <person name="Rad R."/>
            <person name="Beausoleil S.A."/>
            <person name="Villen J."/>
            <person name="Haas W."/>
            <person name="Sowa M.E."/>
            <person name="Gygi S.P."/>
        </authorList>
    </citation>
    <scope>PHOSPHORYLATION [LARGE SCALE ANALYSIS] AT SER-238</scope>
    <scope>IDENTIFICATION BY MASS SPECTROMETRY [LARGE SCALE ANALYSIS]</scope>
    <source>
        <tissue>Brain</tissue>
        <tissue>Brown adipose tissue</tissue>
        <tissue>Heart</tissue>
        <tissue>Kidney</tissue>
        <tissue>Liver</tissue>
        <tissue>Lung</tissue>
        <tissue>Spleen</tissue>
        <tissue>Testis</tissue>
    </source>
</reference>
<reference key="9">
    <citation type="journal article" date="2017" name="Eur. J. Cell Biol.">
        <title>Ccdc181 is a microtubule-binding protein that interacts with Hook1 in haploid male germ cells and localizes to the sperm tail and motile cilia.</title>
        <authorList>
            <person name="Schwarz T."/>
            <person name="Prieler B."/>
            <person name="Schmid J.A."/>
            <person name="Grzmil P."/>
            <person name="Neesen J."/>
        </authorList>
    </citation>
    <scope>INTERACTION WITH CCDC181</scope>
</reference>
<reference key="10">
    <citation type="journal article" date="2017" name="FASEB J.">
        <title>LRGUK1 is part of a multiprotein complex required for manchette function and male fertility.</title>
        <authorList>
            <person name="Okuda H."/>
            <person name="DeBoer K."/>
            <person name="O'Connor A.E."/>
            <person name="Merriner D.J."/>
            <person name="Jamsai D."/>
            <person name="O'Bryan M.K."/>
        </authorList>
    </citation>
    <scope>INTERACTION WITH LRGUK</scope>
    <scope>SUBCELLULAR LOCATION</scope>
</reference>
<protein>
    <recommendedName>
        <fullName>Protein Hook homolog 3</fullName>
        <shortName>mHK3</shortName>
    </recommendedName>
</protein>
<comment type="function">
    <text evidence="2">Acts as an adapter protein linking the dynein motor complex to various cargos and converts dynein from a non-processive to a highly processive motor in the presence of dynactin. Facilitates the interaction between dynein and dynactin and activates dynein processivity (the ability to move along a microtubule for a long distance without falling off the track). Predominantly recruits 2 dyneins, which increases both the force and speed of the microtubule motor. Component of the FTS/Hook/FHIP complex (FHF complex). The FHF complex may function to promote vesicle trafficking and/or fusion via the homotypic vesicular protein sorting complex (the HOPS complex). May regulate clearance of endocytosed receptors such as MSR1. Participates in defining the architecture and localization of the Golgi complex. FHF complex promotes the distribution of AP-4 complex to the perinuclear area of the cell.</text>
</comment>
<comment type="function">
    <text evidence="7">(Microbial infection) Serves as a target for the spiC protein from Salmonella typhimurium, which inactivates it, leading to a strong alteration in cellular trafficking.</text>
</comment>
<comment type="subunit">
    <text evidence="2 8 10 11 12">Self-associates (By similarity). Component of the FTS/Hook/FHIP complex (FHF complex), composed of AKTIP/FTS, FHIP1B, and one or more members of the Hook family of proteins HOOK1, HOOK2, and HOOK3 (By similarity). May interact directly with AKTIP/FTS, HOOK1 and HOOK2 (By similarity). Associates with several subunits of the homotypic vesicular sorting complex (the HOPS complex) including VPS16 and VPS41; these interactions may be indirect (By similarity). Interacts with IIGP1 (PubMed:15075236). Interacts with MSR1, and this association is stimulated by ligand binding to MSR1 (PubMed:17237231). Interacts with microtubules. Part of a tripartite complex with dynein and dynactin, acts an adapter linking the dynein motor complex and dynactin (By similarity). Interacts with dynein intermediate chain and dynactin (DCTN1) (By similarity). Interacts with CCDC181 (PubMed:28283191). Interacts with LRGUK (PubMed:28003339).</text>
</comment>
<comment type="subunit">
    <text evidence="7">(Microbial infection) Interacts with Salmonella typhimurium spiC.</text>
</comment>
<comment type="subcellular location">
    <subcellularLocation>
        <location evidence="8 11">Cytoplasm</location>
        <location evidence="8 11">Cytoskeleton</location>
    </subcellularLocation>
    <subcellularLocation>
        <location evidence="8">Golgi apparatus</location>
    </subcellularLocation>
    <text evidence="2 11">Enriched at the cis-face of the Golgi complex (By similarity). Localizes to microtubule asters in prophase (By similarity). Localizes to the manchette in elongating spermatids (PubMed:28003339).</text>
</comment>
<comment type="tissue specificity">
    <text evidence="6 9">Expressed in brain, cerebellum, heart, intestine, kidney, liver, lung, skeletal muscle, spleen and stomach (at protein level).</text>
</comment>
<comment type="similarity">
    <text evidence="13">Belongs to the hook family.</text>
</comment>
<name>HOOK3_MOUSE</name>
<keyword id="KW-0007">Acetylation</keyword>
<keyword id="KW-0175">Coiled coil</keyword>
<keyword id="KW-0963">Cytoplasm</keyword>
<keyword id="KW-0206">Cytoskeleton</keyword>
<keyword id="KW-0333">Golgi apparatus</keyword>
<keyword id="KW-0493">Microtubule</keyword>
<keyword id="KW-0597">Phosphoprotein</keyword>
<keyword id="KW-0653">Protein transport</keyword>
<keyword id="KW-1185">Reference proteome</keyword>
<keyword id="KW-0813">Transport</keyword>
<sequence length="718" mass="83218">MFNVESVERVELCESLLTWIQTFNVDAPCQTAEDLTNGVVMSQVLQKIDPVYFDDNWLNRIKTEVGDNWRLKISNLKKILKGILDYNHEILGQQINDFTLPDVNLIGEHSDAAELGRMLQLILGCAVNCEQKQEYIQAIMMMEESVQHVVMTAIQELMSKESPVSAGHDAYVDLDRQLKKTTEELNEALSAKEEIAQRCHELDMQVAALQEEKSSLLAENQILMERLNQSDSIEDPNSPAGRRHLQLQTQLEQLQEETFRLEAAKDDYRIRCEELEKEISELRQQNDELTTLADEAQSLKDEIDVLRHSSDKVSKLEGQVESYKKKLEDLGDLRRQVKLLEEKNTMYMQNTVSLEEELRKANAARGQLETYKRQVVELQNRLSDESKKADKLDFEYKRLKEKVDGLQKEKDRLRTERDSLKETIEELRCVQAQEGQLTTQGLMPLGSQESSDSLAAEIVTPEIREKLIRLQHENKMLKLNQEDSDNEKIALLQSLLDDANLRKNELETENRLVNQRLLEVQSQVEELQKSLQDQGSKAEDSVLLKKKLEEHLEKLHEANNELQKKRAIIEDLEPRFNNSSLRIEELQEALRKKEEEMKQMEERYKKYLEKAKSVIRTLDPKQNQGAAPEIQALKNQLQERDRLFHSLEKEYEKTKSQRDMEEKYIVSAWYNMGMTLHKKAAEDRLASTGSGQSFLARQRQATSTRRSYPGHVQPATAR</sequence>